<accession>B0KBI1</accession>
<evidence type="ECO:0000250" key="1"/>
<evidence type="ECO:0000255" key="2">
    <source>
        <dbReference type="HAMAP-Rule" id="MF_00047"/>
    </source>
</evidence>
<reference key="1">
    <citation type="submission" date="2008-01" db="EMBL/GenBank/DDBJ databases">
        <title>Complete sequence of Thermoanaerobacter pseudethanolicus 39E.</title>
        <authorList>
            <person name="Copeland A."/>
            <person name="Lucas S."/>
            <person name="Lapidus A."/>
            <person name="Barry K."/>
            <person name="Glavina del Rio T."/>
            <person name="Dalin E."/>
            <person name="Tice H."/>
            <person name="Pitluck S."/>
            <person name="Bruce D."/>
            <person name="Goodwin L."/>
            <person name="Saunders E."/>
            <person name="Brettin T."/>
            <person name="Detter J.C."/>
            <person name="Han C."/>
            <person name="Schmutz J."/>
            <person name="Larimer F."/>
            <person name="Land M."/>
            <person name="Hauser L."/>
            <person name="Kyrpides N."/>
            <person name="Lykidis A."/>
            <person name="Hemme C."/>
            <person name="Fields M.W."/>
            <person name="He Z."/>
            <person name="Zhou J."/>
            <person name="Richardson P."/>
        </authorList>
    </citation>
    <scope>NUCLEOTIDE SEQUENCE [LARGE SCALE GENOMIC DNA]</scope>
    <source>
        <strain>ATCC 33223 / DSM 2355 / 39E</strain>
    </source>
</reference>
<name>DDL_THEP3</name>
<protein>
    <recommendedName>
        <fullName evidence="2">D-alanine--D-alanine ligase</fullName>
        <ecNumber evidence="2">6.3.2.4</ecNumber>
    </recommendedName>
    <alternativeName>
        <fullName evidence="2">D-Ala-D-Ala ligase</fullName>
    </alternativeName>
    <alternativeName>
        <fullName evidence="2">D-alanylalanine synthetase</fullName>
    </alternativeName>
</protein>
<comment type="function">
    <text evidence="2">Cell wall formation.</text>
</comment>
<comment type="catalytic activity">
    <reaction evidence="2">
        <text>2 D-alanine + ATP = D-alanyl-D-alanine + ADP + phosphate + H(+)</text>
        <dbReference type="Rhea" id="RHEA:11224"/>
        <dbReference type="ChEBI" id="CHEBI:15378"/>
        <dbReference type="ChEBI" id="CHEBI:30616"/>
        <dbReference type="ChEBI" id="CHEBI:43474"/>
        <dbReference type="ChEBI" id="CHEBI:57416"/>
        <dbReference type="ChEBI" id="CHEBI:57822"/>
        <dbReference type="ChEBI" id="CHEBI:456216"/>
        <dbReference type="EC" id="6.3.2.4"/>
    </reaction>
</comment>
<comment type="cofactor">
    <cofactor evidence="1">
        <name>Mg(2+)</name>
        <dbReference type="ChEBI" id="CHEBI:18420"/>
    </cofactor>
    <cofactor evidence="1">
        <name>Mn(2+)</name>
        <dbReference type="ChEBI" id="CHEBI:29035"/>
    </cofactor>
    <text evidence="1">Binds 2 magnesium or manganese ions per subunit.</text>
</comment>
<comment type="pathway">
    <text evidence="2">Cell wall biogenesis; peptidoglycan biosynthesis.</text>
</comment>
<comment type="subcellular location">
    <subcellularLocation>
        <location evidence="2">Cytoplasm</location>
    </subcellularLocation>
</comment>
<comment type="similarity">
    <text evidence="2">Belongs to the D-alanine--D-alanine ligase family.</text>
</comment>
<gene>
    <name evidence="2" type="primary">ddl</name>
    <name type="ordered locus">Teth39_0187</name>
</gene>
<organism>
    <name type="scientific">Thermoanaerobacter pseudethanolicus (strain ATCC 33223 / 39E)</name>
    <name type="common">Clostridium thermohydrosulfuricum</name>
    <dbReference type="NCBI Taxonomy" id="340099"/>
    <lineage>
        <taxon>Bacteria</taxon>
        <taxon>Bacillati</taxon>
        <taxon>Bacillota</taxon>
        <taxon>Clostridia</taxon>
        <taxon>Thermoanaerobacterales</taxon>
        <taxon>Thermoanaerobacteraceae</taxon>
        <taxon>Thermoanaerobacter</taxon>
    </lineage>
</organism>
<proteinExistence type="inferred from homology"/>
<dbReference type="EC" id="6.3.2.4" evidence="2"/>
<dbReference type="EMBL" id="CP000924">
    <property type="protein sequence ID" value="ABY93860.1"/>
    <property type="molecule type" value="Genomic_DNA"/>
</dbReference>
<dbReference type="RefSeq" id="WP_009052136.1">
    <property type="nucleotide sequence ID" value="NC_010321.1"/>
</dbReference>
<dbReference type="SMR" id="B0KBI1"/>
<dbReference type="STRING" id="340099.Teth39_0187"/>
<dbReference type="KEGG" id="tpd:Teth39_0187"/>
<dbReference type="eggNOG" id="COG1181">
    <property type="taxonomic scope" value="Bacteria"/>
</dbReference>
<dbReference type="HOGENOM" id="CLU_039268_0_0_9"/>
<dbReference type="UniPathway" id="UPA00219"/>
<dbReference type="Proteomes" id="UP000002156">
    <property type="component" value="Chromosome"/>
</dbReference>
<dbReference type="GO" id="GO:0005829">
    <property type="term" value="C:cytosol"/>
    <property type="evidence" value="ECO:0007669"/>
    <property type="project" value="TreeGrafter"/>
</dbReference>
<dbReference type="GO" id="GO:0005524">
    <property type="term" value="F:ATP binding"/>
    <property type="evidence" value="ECO:0007669"/>
    <property type="project" value="UniProtKB-KW"/>
</dbReference>
<dbReference type="GO" id="GO:0008716">
    <property type="term" value="F:D-alanine-D-alanine ligase activity"/>
    <property type="evidence" value="ECO:0007669"/>
    <property type="project" value="UniProtKB-UniRule"/>
</dbReference>
<dbReference type="GO" id="GO:0046872">
    <property type="term" value="F:metal ion binding"/>
    <property type="evidence" value="ECO:0007669"/>
    <property type="project" value="UniProtKB-KW"/>
</dbReference>
<dbReference type="GO" id="GO:0071555">
    <property type="term" value="P:cell wall organization"/>
    <property type="evidence" value="ECO:0007669"/>
    <property type="project" value="UniProtKB-KW"/>
</dbReference>
<dbReference type="GO" id="GO:0009252">
    <property type="term" value="P:peptidoglycan biosynthetic process"/>
    <property type="evidence" value="ECO:0007669"/>
    <property type="project" value="UniProtKB-UniRule"/>
</dbReference>
<dbReference type="GO" id="GO:0008360">
    <property type="term" value="P:regulation of cell shape"/>
    <property type="evidence" value="ECO:0007669"/>
    <property type="project" value="UniProtKB-KW"/>
</dbReference>
<dbReference type="FunFam" id="3.30.1490.20:FF:000007">
    <property type="entry name" value="D-alanine--D-alanine ligase"/>
    <property type="match status" value="1"/>
</dbReference>
<dbReference type="FunFam" id="3.30.470.20:FF:000008">
    <property type="entry name" value="D-alanine--D-alanine ligase"/>
    <property type="match status" value="1"/>
</dbReference>
<dbReference type="Gene3D" id="3.40.50.20">
    <property type="match status" value="1"/>
</dbReference>
<dbReference type="Gene3D" id="3.30.1490.20">
    <property type="entry name" value="ATP-grasp fold, A domain"/>
    <property type="match status" value="1"/>
</dbReference>
<dbReference type="Gene3D" id="3.30.470.20">
    <property type="entry name" value="ATP-grasp fold, B domain"/>
    <property type="match status" value="1"/>
</dbReference>
<dbReference type="HAMAP" id="MF_00047">
    <property type="entry name" value="Dala_Dala_lig"/>
    <property type="match status" value="1"/>
</dbReference>
<dbReference type="InterPro" id="IPR011761">
    <property type="entry name" value="ATP-grasp"/>
</dbReference>
<dbReference type="InterPro" id="IPR013815">
    <property type="entry name" value="ATP_grasp_subdomain_1"/>
</dbReference>
<dbReference type="InterPro" id="IPR000291">
    <property type="entry name" value="D-Ala_lig_Van_CS"/>
</dbReference>
<dbReference type="InterPro" id="IPR005905">
    <property type="entry name" value="D_ala_D_ala"/>
</dbReference>
<dbReference type="InterPro" id="IPR011095">
    <property type="entry name" value="Dala_Dala_lig_C"/>
</dbReference>
<dbReference type="InterPro" id="IPR011127">
    <property type="entry name" value="Dala_Dala_lig_N"/>
</dbReference>
<dbReference type="InterPro" id="IPR016185">
    <property type="entry name" value="PreATP-grasp_dom_sf"/>
</dbReference>
<dbReference type="NCBIfam" id="TIGR01205">
    <property type="entry name" value="D_ala_D_alaTIGR"/>
    <property type="match status" value="1"/>
</dbReference>
<dbReference type="NCBIfam" id="NF002378">
    <property type="entry name" value="PRK01372.1"/>
    <property type="match status" value="1"/>
</dbReference>
<dbReference type="NCBIfam" id="NF002528">
    <property type="entry name" value="PRK01966.1-4"/>
    <property type="match status" value="1"/>
</dbReference>
<dbReference type="PANTHER" id="PTHR23132">
    <property type="entry name" value="D-ALANINE--D-ALANINE LIGASE"/>
    <property type="match status" value="1"/>
</dbReference>
<dbReference type="PANTHER" id="PTHR23132:SF25">
    <property type="entry name" value="D-ALANINE--D-ALANINE LIGASE A"/>
    <property type="match status" value="1"/>
</dbReference>
<dbReference type="Pfam" id="PF07478">
    <property type="entry name" value="Dala_Dala_lig_C"/>
    <property type="match status" value="1"/>
</dbReference>
<dbReference type="Pfam" id="PF01820">
    <property type="entry name" value="Dala_Dala_lig_N"/>
    <property type="match status" value="1"/>
</dbReference>
<dbReference type="PIRSF" id="PIRSF039102">
    <property type="entry name" value="Ddl/VanB"/>
    <property type="match status" value="1"/>
</dbReference>
<dbReference type="SUPFAM" id="SSF56059">
    <property type="entry name" value="Glutathione synthetase ATP-binding domain-like"/>
    <property type="match status" value="1"/>
</dbReference>
<dbReference type="SUPFAM" id="SSF52440">
    <property type="entry name" value="PreATP-grasp domain"/>
    <property type="match status" value="1"/>
</dbReference>
<dbReference type="PROSITE" id="PS50975">
    <property type="entry name" value="ATP_GRASP"/>
    <property type="match status" value="1"/>
</dbReference>
<dbReference type="PROSITE" id="PS00843">
    <property type="entry name" value="DALA_DALA_LIGASE_1"/>
    <property type="match status" value="1"/>
</dbReference>
<dbReference type="PROSITE" id="PS00844">
    <property type="entry name" value="DALA_DALA_LIGASE_2"/>
    <property type="match status" value="1"/>
</dbReference>
<feature type="chain" id="PRO_0000341184" description="D-alanine--D-alanine ligase">
    <location>
        <begin position="1"/>
        <end position="359"/>
    </location>
</feature>
<feature type="domain" description="ATP-grasp" evidence="2">
    <location>
        <begin position="141"/>
        <end position="346"/>
    </location>
</feature>
<feature type="binding site" evidence="2">
    <location>
        <begin position="172"/>
        <end position="227"/>
    </location>
    <ligand>
        <name>ATP</name>
        <dbReference type="ChEBI" id="CHEBI:30616"/>
    </ligand>
</feature>
<feature type="binding site" evidence="2">
    <location>
        <position position="299"/>
    </location>
    <ligand>
        <name>Mg(2+)</name>
        <dbReference type="ChEBI" id="CHEBI:18420"/>
        <label>1</label>
    </ligand>
</feature>
<feature type="binding site" evidence="2">
    <location>
        <position position="313"/>
    </location>
    <ligand>
        <name>Mg(2+)</name>
        <dbReference type="ChEBI" id="CHEBI:18420"/>
        <label>1</label>
    </ligand>
</feature>
<feature type="binding site" evidence="2">
    <location>
        <position position="313"/>
    </location>
    <ligand>
        <name>Mg(2+)</name>
        <dbReference type="ChEBI" id="CHEBI:18420"/>
        <label>2</label>
    </ligand>
</feature>
<feature type="binding site" evidence="2">
    <location>
        <position position="315"/>
    </location>
    <ligand>
        <name>Mg(2+)</name>
        <dbReference type="ChEBI" id="CHEBI:18420"/>
        <label>2</label>
    </ligand>
</feature>
<sequence>MEKKKIAVLFGGQSGEHEVSLMSAKSIINNLDKDKYEIYMVGITKKGEWYLYRGDVGKIETGEWEKEGIPAIMGASTKYRGIITFEDGENGFYPIDVVFPVLHGPNGEDGTIQGLLELLDMPYVGANVLSSALCMDKVFTKRIFKEAGLPTPDFVVVYGKEIEDLEAIKKKIEHLGYPCFVKPANLGSSVGITKVHNEEELPGALKLAAKYDRKLLIERGIDAREIECSVLGNENPEASIAGEIVPSNEFYDYNAKYFDGGKSLLLIPAPLPDEKMEEVRKLAIKAYKALDLRGMARVDFLMDRNTGTLYLNEVNTIPGFTKISMYPKLWESSGKSYSTLLDELINLAVESHNEKCREW</sequence>
<keyword id="KW-0067">ATP-binding</keyword>
<keyword id="KW-0133">Cell shape</keyword>
<keyword id="KW-0961">Cell wall biogenesis/degradation</keyword>
<keyword id="KW-0963">Cytoplasm</keyword>
<keyword id="KW-0436">Ligase</keyword>
<keyword id="KW-0460">Magnesium</keyword>
<keyword id="KW-0464">Manganese</keyword>
<keyword id="KW-0479">Metal-binding</keyword>
<keyword id="KW-0547">Nucleotide-binding</keyword>
<keyword id="KW-0573">Peptidoglycan synthesis</keyword>
<keyword id="KW-1185">Reference proteome</keyword>